<feature type="chain" id="PRO_1000026590" description="Phosphatidylserine decarboxylase beta chain" evidence="1">
    <location>
        <begin position="1"/>
        <end position="251"/>
    </location>
</feature>
<feature type="chain" id="PRO_1000026591" description="Phosphatidylserine decarboxylase alpha chain" evidence="1">
    <location>
        <begin position="252"/>
        <end position="289"/>
    </location>
</feature>
<feature type="active site" description="Charge relay system; for autoendoproteolytic cleavage activity" evidence="1">
    <location>
        <position position="89"/>
    </location>
</feature>
<feature type="active site" description="Charge relay system; for autoendoproteolytic cleavage activity" evidence="1">
    <location>
        <position position="146"/>
    </location>
</feature>
<feature type="active site" description="Charge relay system; for autoendoproteolytic cleavage activity" evidence="1">
    <location>
        <position position="252"/>
    </location>
</feature>
<feature type="active site" description="Schiff-base intermediate with substrate; via pyruvic acid; for decarboxylase activity" evidence="1">
    <location>
        <position position="252"/>
    </location>
</feature>
<feature type="site" description="Cleavage (non-hydrolytic); by autocatalysis" evidence="1">
    <location>
        <begin position="251"/>
        <end position="252"/>
    </location>
</feature>
<feature type="modified residue" description="Pyruvic acid (Ser); by autocatalysis" evidence="1">
    <location>
        <position position="252"/>
    </location>
</feature>
<reference key="1">
    <citation type="submission" date="2006-12" db="EMBL/GenBank/DDBJ databases">
        <title>Complete sequence of Shewanella sp. W3-18-1.</title>
        <authorList>
            <consortium name="US DOE Joint Genome Institute"/>
            <person name="Copeland A."/>
            <person name="Lucas S."/>
            <person name="Lapidus A."/>
            <person name="Barry K."/>
            <person name="Detter J.C."/>
            <person name="Glavina del Rio T."/>
            <person name="Hammon N."/>
            <person name="Israni S."/>
            <person name="Dalin E."/>
            <person name="Tice H."/>
            <person name="Pitluck S."/>
            <person name="Chain P."/>
            <person name="Malfatti S."/>
            <person name="Shin M."/>
            <person name="Vergez L."/>
            <person name="Schmutz J."/>
            <person name="Larimer F."/>
            <person name="Land M."/>
            <person name="Hauser L."/>
            <person name="Kyrpides N."/>
            <person name="Lykidis A."/>
            <person name="Tiedje J."/>
            <person name="Richardson P."/>
        </authorList>
    </citation>
    <scope>NUCLEOTIDE SEQUENCE [LARGE SCALE GENOMIC DNA]</scope>
    <source>
        <strain>W3-18-1</strain>
    </source>
</reference>
<accession>A1RFQ8</accession>
<proteinExistence type="inferred from homology"/>
<keyword id="KW-1003">Cell membrane</keyword>
<keyword id="KW-0210">Decarboxylase</keyword>
<keyword id="KW-0444">Lipid biosynthesis</keyword>
<keyword id="KW-0443">Lipid metabolism</keyword>
<keyword id="KW-0456">Lyase</keyword>
<keyword id="KW-0472">Membrane</keyword>
<keyword id="KW-0594">Phospholipid biosynthesis</keyword>
<keyword id="KW-1208">Phospholipid metabolism</keyword>
<keyword id="KW-0670">Pyruvate</keyword>
<keyword id="KW-0865">Zymogen</keyword>
<dbReference type="EC" id="4.1.1.65" evidence="1"/>
<dbReference type="EMBL" id="CP000503">
    <property type="protein sequence ID" value="ABM23503.1"/>
    <property type="molecule type" value="Genomic_DNA"/>
</dbReference>
<dbReference type="SMR" id="A1RFQ8"/>
<dbReference type="KEGG" id="shw:Sputw3181_0652"/>
<dbReference type="HOGENOM" id="CLU_029061_4_1_6"/>
<dbReference type="UniPathway" id="UPA00558">
    <property type="reaction ID" value="UER00616"/>
</dbReference>
<dbReference type="Proteomes" id="UP000002597">
    <property type="component" value="Chromosome"/>
</dbReference>
<dbReference type="GO" id="GO:0005886">
    <property type="term" value="C:plasma membrane"/>
    <property type="evidence" value="ECO:0007669"/>
    <property type="project" value="UniProtKB-SubCell"/>
</dbReference>
<dbReference type="GO" id="GO:0004609">
    <property type="term" value="F:phosphatidylserine decarboxylase activity"/>
    <property type="evidence" value="ECO:0007669"/>
    <property type="project" value="UniProtKB-UniRule"/>
</dbReference>
<dbReference type="GO" id="GO:0006646">
    <property type="term" value="P:phosphatidylethanolamine biosynthetic process"/>
    <property type="evidence" value="ECO:0007669"/>
    <property type="project" value="UniProtKB-UniRule"/>
</dbReference>
<dbReference type="HAMAP" id="MF_00662">
    <property type="entry name" value="PS_decarb_PSD_B_type1"/>
    <property type="match status" value="1"/>
</dbReference>
<dbReference type="InterPro" id="IPR003817">
    <property type="entry name" value="PS_Dcarbxylase"/>
</dbReference>
<dbReference type="InterPro" id="IPR033177">
    <property type="entry name" value="PSD-B"/>
</dbReference>
<dbReference type="InterPro" id="IPR033178">
    <property type="entry name" value="PSD_type1_pro"/>
</dbReference>
<dbReference type="NCBIfam" id="TIGR00163">
    <property type="entry name" value="PS_decarb"/>
    <property type="match status" value="1"/>
</dbReference>
<dbReference type="PANTHER" id="PTHR10067">
    <property type="entry name" value="PHOSPHATIDYLSERINE DECARBOXYLASE"/>
    <property type="match status" value="1"/>
</dbReference>
<dbReference type="PANTHER" id="PTHR10067:SF6">
    <property type="entry name" value="PHOSPHATIDYLSERINE DECARBOXYLASE PROENZYME, MITOCHONDRIAL"/>
    <property type="match status" value="1"/>
</dbReference>
<dbReference type="Pfam" id="PF02666">
    <property type="entry name" value="PS_Dcarbxylase"/>
    <property type="match status" value="1"/>
</dbReference>
<sequence>MDKVKIALQYMLPKHLLSRLVGKLAAAEAGTLTTAAIKWFIKQYKIDMSEAAQSEPQAYKSFNDFFTRALKPGIRPINQHTHIMVHPVDGAVSQLGPIKEGRIFQAKGHHYSSLTLLGDQAQDAKRFEGGDFATIYLAPKDYHRIHMPIKGTLSKMTYVPGELFSVNPLTARHVPGLFARNERVVAIFETEHGPLAMVLVGATIVASIETVWAGTITPPTGKQVFTWEYPTVGPDAITLDKGDEMGRFKLGSTVVMLFAKDAIDTFAEGVEAEAVTRMGQAFANLNNPK</sequence>
<protein>
    <recommendedName>
        <fullName evidence="1">Phosphatidylserine decarboxylase proenzyme</fullName>
        <ecNumber evidence="1">4.1.1.65</ecNumber>
    </recommendedName>
    <component>
        <recommendedName>
            <fullName evidence="1">Phosphatidylserine decarboxylase alpha chain</fullName>
        </recommendedName>
    </component>
    <component>
        <recommendedName>
            <fullName evidence="1">Phosphatidylserine decarboxylase beta chain</fullName>
        </recommendedName>
    </component>
</protein>
<comment type="function">
    <text evidence="1">Catalyzes the formation of phosphatidylethanolamine (PtdEtn) from phosphatidylserine (PtdSer).</text>
</comment>
<comment type="catalytic activity">
    <reaction evidence="1">
        <text>a 1,2-diacyl-sn-glycero-3-phospho-L-serine + H(+) = a 1,2-diacyl-sn-glycero-3-phosphoethanolamine + CO2</text>
        <dbReference type="Rhea" id="RHEA:20828"/>
        <dbReference type="ChEBI" id="CHEBI:15378"/>
        <dbReference type="ChEBI" id="CHEBI:16526"/>
        <dbReference type="ChEBI" id="CHEBI:57262"/>
        <dbReference type="ChEBI" id="CHEBI:64612"/>
        <dbReference type="EC" id="4.1.1.65"/>
    </reaction>
</comment>
<comment type="cofactor">
    <cofactor evidence="1">
        <name>pyruvate</name>
        <dbReference type="ChEBI" id="CHEBI:15361"/>
    </cofactor>
    <text evidence="1">Binds 1 pyruvoyl group covalently per subunit.</text>
</comment>
<comment type="pathway">
    <text evidence="1">Phospholipid metabolism; phosphatidylethanolamine biosynthesis; phosphatidylethanolamine from CDP-diacylglycerol: step 2/2.</text>
</comment>
<comment type="subunit">
    <text evidence="1">Heterodimer of a large membrane-associated beta subunit and a small pyruvoyl-containing alpha subunit.</text>
</comment>
<comment type="subcellular location">
    <subcellularLocation>
        <location evidence="1">Cell membrane</location>
        <topology evidence="1">Peripheral membrane protein</topology>
    </subcellularLocation>
</comment>
<comment type="PTM">
    <text evidence="1">Is synthesized initially as an inactive proenzyme. Formation of the active enzyme involves a self-maturation process in which the active site pyruvoyl group is generated from an internal serine residue via an autocatalytic post-translational modification. Two non-identical subunits are generated from the proenzyme in this reaction, and the pyruvate is formed at the N-terminus of the alpha chain, which is derived from the carboxyl end of the proenzyme. The autoendoproteolytic cleavage occurs by a canonical serine protease mechanism, in which the side chain hydroxyl group of the serine supplies its oxygen atom to form the C-terminus of the beta chain, while the remainder of the serine residue undergoes an oxidative deamination to produce ammonia and the pyruvoyl prosthetic group on the alpha chain. During this reaction, the Ser that is part of the protease active site of the proenzyme becomes the pyruvoyl prosthetic group, which constitutes an essential element of the active site of the mature decarboxylase.</text>
</comment>
<comment type="similarity">
    <text evidence="1">Belongs to the phosphatidylserine decarboxylase family. PSD-B subfamily. Prokaryotic type I sub-subfamily.</text>
</comment>
<gene>
    <name evidence="1" type="primary">psd</name>
    <name type="ordered locus">Sputw3181_0652</name>
</gene>
<organism>
    <name type="scientific">Shewanella sp. (strain W3-18-1)</name>
    <dbReference type="NCBI Taxonomy" id="351745"/>
    <lineage>
        <taxon>Bacteria</taxon>
        <taxon>Pseudomonadati</taxon>
        <taxon>Pseudomonadota</taxon>
        <taxon>Gammaproteobacteria</taxon>
        <taxon>Alteromonadales</taxon>
        <taxon>Shewanellaceae</taxon>
        <taxon>Shewanella</taxon>
    </lineage>
</organism>
<evidence type="ECO:0000255" key="1">
    <source>
        <dbReference type="HAMAP-Rule" id="MF_00662"/>
    </source>
</evidence>
<name>PSD_SHESW</name>